<organism>
    <name type="scientific">Amborella trichopoda</name>
    <dbReference type="NCBI Taxonomy" id="13333"/>
    <lineage>
        <taxon>Eukaryota</taxon>
        <taxon>Viridiplantae</taxon>
        <taxon>Streptophyta</taxon>
        <taxon>Embryophyta</taxon>
        <taxon>Tracheophyta</taxon>
        <taxon>Spermatophyta</taxon>
        <taxon>Magnoliopsida</taxon>
        <taxon>Amborellales</taxon>
        <taxon>Amborellaceae</taxon>
        <taxon>Amborella</taxon>
    </lineage>
</organism>
<gene>
    <name evidence="1" type="primary">petN</name>
</gene>
<accession>Q70Y10</accession>
<geneLocation type="chloroplast"/>
<keyword id="KW-0150">Chloroplast</keyword>
<keyword id="KW-0249">Electron transport</keyword>
<keyword id="KW-0472">Membrane</keyword>
<keyword id="KW-0602">Photosynthesis</keyword>
<keyword id="KW-0934">Plastid</keyword>
<keyword id="KW-1185">Reference proteome</keyword>
<keyword id="KW-0793">Thylakoid</keyword>
<keyword id="KW-0812">Transmembrane</keyword>
<keyword id="KW-1133">Transmembrane helix</keyword>
<keyword id="KW-0813">Transport</keyword>
<feature type="chain" id="PRO_0000217097" description="Cytochrome b6-f complex subunit 8">
    <location>
        <begin position="1"/>
        <end position="29"/>
    </location>
</feature>
<feature type="transmembrane region" description="Helical" evidence="1">
    <location>
        <begin position="3"/>
        <end position="23"/>
    </location>
</feature>
<dbReference type="EMBL" id="AJ506156">
    <property type="protein sequence ID" value="CAD45100.1"/>
    <property type="molecule type" value="Genomic_DNA"/>
</dbReference>
<dbReference type="RefSeq" id="NP_904092.1">
    <property type="nucleotide sequence ID" value="NC_005086.1"/>
</dbReference>
<dbReference type="SMR" id="Q70Y10"/>
<dbReference type="STRING" id="13333.Q70Y10"/>
<dbReference type="GeneID" id="2597962"/>
<dbReference type="KEGG" id="atr:2597962"/>
<dbReference type="Proteomes" id="UP000017836">
    <property type="component" value="Chloroplast"/>
</dbReference>
<dbReference type="GO" id="GO:0009535">
    <property type="term" value="C:chloroplast thylakoid membrane"/>
    <property type="evidence" value="ECO:0007669"/>
    <property type="project" value="UniProtKB-SubCell"/>
</dbReference>
<dbReference type="GO" id="GO:0009512">
    <property type="term" value="C:cytochrome b6f complex"/>
    <property type="evidence" value="ECO:0007669"/>
    <property type="project" value="InterPro"/>
</dbReference>
<dbReference type="GO" id="GO:0045158">
    <property type="term" value="F:electron transporter, transferring electrons within cytochrome b6/f complex of photosystem II activity"/>
    <property type="evidence" value="ECO:0007669"/>
    <property type="project" value="InterPro"/>
</dbReference>
<dbReference type="GO" id="GO:0017004">
    <property type="term" value="P:cytochrome complex assembly"/>
    <property type="evidence" value="ECO:0007669"/>
    <property type="project" value="UniProtKB-UniRule"/>
</dbReference>
<dbReference type="GO" id="GO:0015979">
    <property type="term" value="P:photosynthesis"/>
    <property type="evidence" value="ECO:0007669"/>
    <property type="project" value="UniProtKB-KW"/>
</dbReference>
<dbReference type="HAMAP" id="MF_00395">
    <property type="entry name" value="Cytb6_f_PetN"/>
    <property type="match status" value="1"/>
</dbReference>
<dbReference type="InterPro" id="IPR036143">
    <property type="entry name" value="Cytochr_b6-f_cplx_su8_sf"/>
</dbReference>
<dbReference type="InterPro" id="IPR005497">
    <property type="entry name" value="Cytochrome_b6-f_cplx_su8"/>
</dbReference>
<dbReference type="Pfam" id="PF03742">
    <property type="entry name" value="PetN"/>
    <property type="match status" value="1"/>
</dbReference>
<dbReference type="SUPFAM" id="SSF103451">
    <property type="entry name" value="PetN subunit of the cytochrome b6f complex"/>
    <property type="match status" value="1"/>
</dbReference>
<protein>
    <recommendedName>
        <fullName evidence="1">Cytochrome b6-f complex subunit 8</fullName>
    </recommendedName>
    <alternativeName>
        <fullName evidence="1">Cytochrome b6-f complex subunit PetN</fullName>
    </alternativeName>
    <alternativeName>
        <fullName evidence="1">Cytochrome b6-f complex subunit VIII</fullName>
    </alternativeName>
</protein>
<proteinExistence type="inferred from homology"/>
<sequence>MDIVSLAWAALMVVFTFSLSLVVWGRSGL</sequence>
<reference key="1">
    <citation type="journal article" date="2003" name="Mol. Biol. Evol.">
        <title>Analysis of the Amborella trichopoda chloroplast genome sequence suggests that Amborella is not a basal angiosperm.</title>
        <authorList>
            <person name="Goremykin V.V."/>
            <person name="Hirsch-Ernst K.I."/>
            <person name="Wolfl S."/>
            <person name="Hellwig F.H."/>
        </authorList>
    </citation>
    <scope>NUCLEOTIDE SEQUENCE [LARGE SCALE GENOMIC DNA]</scope>
</reference>
<evidence type="ECO:0000255" key="1">
    <source>
        <dbReference type="HAMAP-Rule" id="MF_00395"/>
    </source>
</evidence>
<comment type="function">
    <text evidence="1">Component of the cytochrome b6-f complex, which mediates electron transfer between photosystem II (PSII) and photosystem I (PSI), cyclic electron flow around PSI, and state transitions.</text>
</comment>
<comment type="subunit">
    <text evidence="1">The 4 large subunits of the cytochrome b6-f complex are cytochrome b6, subunit IV (17 kDa polypeptide, PetD), cytochrome f and the Rieske protein, while the 4 small subunits are PetG, PetL, PetM and PetN. The complex functions as a dimer.</text>
</comment>
<comment type="subcellular location">
    <subcellularLocation>
        <location evidence="1">Plastid</location>
        <location evidence="1">Chloroplast thylakoid membrane</location>
        <topology evidence="1">Single-pass membrane protein</topology>
    </subcellularLocation>
</comment>
<comment type="similarity">
    <text evidence="1">Belongs to the PetN family.</text>
</comment>
<name>PETN_AMBTC</name>